<keyword id="KW-0997">Cell inner membrane</keyword>
<keyword id="KW-1003">Cell membrane</keyword>
<keyword id="KW-0472">Membrane</keyword>
<keyword id="KW-0812">Transmembrane</keyword>
<keyword id="KW-1133">Transmembrane helix</keyword>
<name>FRDC_VIBC1</name>
<comment type="function">
    <text evidence="1">Anchors the catalytic components of the fumarate reductase complex to the cell membrane, binds quinones.</text>
</comment>
<comment type="subunit">
    <text evidence="1">Part of an enzyme complex containing four subunits: a flavoprotein (FrdA), an iron-sulfur protein (FrdB), and two hydrophobic anchor proteins (FrdC and FrdD).</text>
</comment>
<comment type="subcellular location">
    <subcellularLocation>
        <location evidence="1">Cell inner membrane</location>
        <topology evidence="1">Multi-pass membrane protein</topology>
    </subcellularLocation>
</comment>
<comment type="similarity">
    <text evidence="1">Belongs to the FrdC family.</text>
</comment>
<protein>
    <recommendedName>
        <fullName evidence="1">Fumarate reductase subunit C</fullName>
    </recommendedName>
    <alternativeName>
        <fullName evidence="1">Quinol-fumarate reductase subunit C</fullName>
        <shortName evidence="1">QFR subunit C</shortName>
    </alternativeName>
</protein>
<organism>
    <name type="scientific">Vibrio campbellii (strain ATCC BAA-1116)</name>
    <dbReference type="NCBI Taxonomy" id="2902295"/>
    <lineage>
        <taxon>Bacteria</taxon>
        <taxon>Pseudomonadati</taxon>
        <taxon>Pseudomonadota</taxon>
        <taxon>Gammaproteobacteria</taxon>
        <taxon>Vibrionales</taxon>
        <taxon>Vibrionaceae</taxon>
        <taxon>Vibrio</taxon>
    </lineage>
</organism>
<sequence length="127" mass="14698">MSNRKPYVREVKRTWWKNHPFYRFYMLREATVLPLILFTIFLTFGLGSLVKGPEAWQGWLEFMANPIVVAINIVALLGSLFHAQTFFSMMPQVMPIRLKGKPVDKKIIVLTQWAAVAFISLIVLIVM</sequence>
<proteinExistence type="inferred from homology"/>
<gene>
    <name evidence="1" type="primary">frdC</name>
    <name type="ordered locus">VIBHAR_00133</name>
</gene>
<evidence type="ECO:0000255" key="1">
    <source>
        <dbReference type="HAMAP-Rule" id="MF_00708"/>
    </source>
</evidence>
<feature type="chain" id="PRO_1000045537" description="Fumarate reductase subunit C">
    <location>
        <begin position="1"/>
        <end position="127"/>
    </location>
</feature>
<feature type="transmembrane region" description="Helical" evidence="1">
    <location>
        <begin position="30"/>
        <end position="50"/>
    </location>
</feature>
<feature type="transmembrane region" description="Helical" evidence="1">
    <location>
        <begin position="67"/>
        <end position="87"/>
    </location>
</feature>
<feature type="transmembrane region" description="Helical" evidence="1">
    <location>
        <begin position="107"/>
        <end position="127"/>
    </location>
</feature>
<accession>A7MZ43</accession>
<dbReference type="EMBL" id="CP000789">
    <property type="protein sequence ID" value="ABU69181.1"/>
    <property type="molecule type" value="Genomic_DNA"/>
</dbReference>
<dbReference type="RefSeq" id="WP_005425044.1">
    <property type="nucleotide sequence ID" value="NC_022269.1"/>
</dbReference>
<dbReference type="SMR" id="A7MZ43"/>
<dbReference type="GeneID" id="83583605"/>
<dbReference type="KEGG" id="vha:VIBHAR_00133"/>
<dbReference type="PATRIC" id="fig|338187.25.peg.2400"/>
<dbReference type="Proteomes" id="UP000008152">
    <property type="component" value="Chromosome I"/>
</dbReference>
<dbReference type="GO" id="GO:0045283">
    <property type="term" value="C:fumarate reductase complex"/>
    <property type="evidence" value="ECO:0007669"/>
    <property type="project" value="UniProtKB-UniRule"/>
</dbReference>
<dbReference type="GO" id="GO:0005886">
    <property type="term" value="C:plasma membrane"/>
    <property type="evidence" value="ECO:0007669"/>
    <property type="project" value="UniProtKB-SubCell"/>
</dbReference>
<dbReference type="GO" id="GO:0000104">
    <property type="term" value="F:succinate dehydrogenase activity"/>
    <property type="evidence" value="ECO:0007669"/>
    <property type="project" value="UniProtKB-UniRule"/>
</dbReference>
<dbReference type="CDD" id="cd00546">
    <property type="entry name" value="QFR_TypeD_subunitC"/>
    <property type="match status" value="1"/>
</dbReference>
<dbReference type="Gene3D" id="1.20.1300.10">
    <property type="entry name" value="Fumarate reductase/succinate dehydrogenase, transmembrane subunit"/>
    <property type="match status" value="1"/>
</dbReference>
<dbReference type="HAMAP" id="MF_00708">
    <property type="entry name" value="Fumarate_red_C"/>
    <property type="match status" value="1"/>
</dbReference>
<dbReference type="InterPro" id="IPR003510">
    <property type="entry name" value="Fumarate_red_C"/>
</dbReference>
<dbReference type="InterPro" id="IPR034804">
    <property type="entry name" value="SQR/QFR_C/D"/>
</dbReference>
<dbReference type="NCBIfam" id="NF003445">
    <property type="entry name" value="PRK04987.1"/>
    <property type="match status" value="1"/>
</dbReference>
<dbReference type="Pfam" id="PF02300">
    <property type="entry name" value="Fumarate_red_C"/>
    <property type="match status" value="1"/>
</dbReference>
<dbReference type="PIRSF" id="PIRSF000180">
    <property type="entry name" value="FrdC"/>
    <property type="match status" value="1"/>
</dbReference>
<dbReference type="SUPFAM" id="SSF81343">
    <property type="entry name" value="Fumarate reductase respiratory complex transmembrane subunits"/>
    <property type="match status" value="1"/>
</dbReference>
<reference key="1">
    <citation type="submission" date="2007-08" db="EMBL/GenBank/DDBJ databases">
        <authorList>
            <consortium name="The Vibrio harveyi Genome Sequencing Project"/>
            <person name="Bassler B."/>
            <person name="Clifton S.W."/>
            <person name="Fulton L."/>
            <person name="Delehaunty K."/>
            <person name="Fronick C."/>
            <person name="Harrison M."/>
            <person name="Markivic C."/>
            <person name="Fulton R."/>
            <person name="Tin-Wollam A.-M."/>
            <person name="Shah N."/>
            <person name="Pepin K."/>
            <person name="Nash W."/>
            <person name="Thiruvilangam P."/>
            <person name="Bhonagiri V."/>
            <person name="Waters C."/>
            <person name="Tu K.C."/>
            <person name="Irgon J."/>
            <person name="Wilson R.K."/>
        </authorList>
    </citation>
    <scope>NUCLEOTIDE SEQUENCE [LARGE SCALE GENOMIC DNA]</scope>
    <source>
        <strain>ATCC BAA-1116 / BB120</strain>
    </source>
</reference>